<organism>
    <name type="scientific">Prochlorococcus marinus (strain MIT 9303)</name>
    <dbReference type="NCBI Taxonomy" id="59922"/>
    <lineage>
        <taxon>Bacteria</taxon>
        <taxon>Bacillati</taxon>
        <taxon>Cyanobacteriota</taxon>
        <taxon>Cyanophyceae</taxon>
        <taxon>Synechococcales</taxon>
        <taxon>Prochlorococcaceae</taxon>
        <taxon>Prochlorococcus</taxon>
    </lineage>
</organism>
<keyword id="KW-0067">ATP-binding</keyword>
<keyword id="KW-0997">Cell inner membrane</keyword>
<keyword id="KW-1003">Cell membrane</keyword>
<keyword id="KW-0963">Cytoplasm</keyword>
<keyword id="KW-0472">Membrane</keyword>
<keyword id="KW-0547">Nucleotide-binding</keyword>
<keyword id="KW-0653">Protein transport</keyword>
<keyword id="KW-0793">Thylakoid</keyword>
<keyword id="KW-1278">Translocase</keyword>
<keyword id="KW-0811">Translocation</keyword>
<keyword id="KW-0813">Transport</keyword>
<dbReference type="EC" id="7.4.2.8" evidence="1"/>
<dbReference type="EMBL" id="CP000554">
    <property type="protein sequence ID" value="ABM76906.1"/>
    <property type="molecule type" value="Genomic_DNA"/>
</dbReference>
<dbReference type="RefSeq" id="WP_011824837.1">
    <property type="nucleotide sequence ID" value="NC_008820.1"/>
</dbReference>
<dbReference type="SMR" id="A2C5Z6"/>
<dbReference type="STRING" id="59922.P9303_01511"/>
<dbReference type="KEGG" id="pmf:P9303_01511"/>
<dbReference type="HOGENOM" id="CLU_005314_3_0_3"/>
<dbReference type="BioCyc" id="PMAR59922:G1G80-145-MONOMER"/>
<dbReference type="Proteomes" id="UP000002274">
    <property type="component" value="Chromosome"/>
</dbReference>
<dbReference type="GO" id="GO:0031522">
    <property type="term" value="C:cell envelope Sec protein transport complex"/>
    <property type="evidence" value="ECO:0007669"/>
    <property type="project" value="TreeGrafter"/>
</dbReference>
<dbReference type="GO" id="GO:0005829">
    <property type="term" value="C:cytosol"/>
    <property type="evidence" value="ECO:0007669"/>
    <property type="project" value="TreeGrafter"/>
</dbReference>
<dbReference type="GO" id="GO:0031676">
    <property type="term" value="C:plasma membrane-derived thylakoid membrane"/>
    <property type="evidence" value="ECO:0007669"/>
    <property type="project" value="UniProtKB-SubCell"/>
</dbReference>
<dbReference type="GO" id="GO:0005524">
    <property type="term" value="F:ATP binding"/>
    <property type="evidence" value="ECO:0007669"/>
    <property type="project" value="UniProtKB-UniRule"/>
</dbReference>
<dbReference type="GO" id="GO:0008564">
    <property type="term" value="F:protein-exporting ATPase activity"/>
    <property type="evidence" value="ECO:0007669"/>
    <property type="project" value="UniProtKB-EC"/>
</dbReference>
<dbReference type="GO" id="GO:0065002">
    <property type="term" value="P:intracellular protein transmembrane transport"/>
    <property type="evidence" value="ECO:0007669"/>
    <property type="project" value="UniProtKB-UniRule"/>
</dbReference>
<dbReference type="GO" id="GO:0017038">
    <property type="term" value="P:protein import"/>
    <property type="evidence" value="ECO:0007669"/>
    <property type="project" value="InterPro"/>
</dbReference>
<dbReference type="GO" id="GO:0006605">
    <property type="term" value="P:protein targeting"/>
    <property type="evidence" value="ECO:0007669"/>
    <property type="project" value="UniProtKB-UniRule"/>
</dbReference>
<dbReference type="GO" id="GO:0043952">
    <property type="term" value="P:protein transport by the Sec complex"/>
    <property type="evidence" value="ECO:0007669"/>
    <property type="project" value="TreeGrafter"/>
</dbReference>
<dbReference type="CDD" id="cd17928">
    <property type="entry name" value="DEXDc_SecA"/>
    <property type="match status" value="1"/>
</dbReference>
<dbReference type="CDD" id="cd18803">
    <property type="entry name" value="SF2_C_secA"/>
    <property type="match status" value="1"/>
</dbReference>
<dbReference type="FunFam" id="3.90.1440.10:FF:000003">
    <property type="entry name" value="Preprotein translocase SecA subunit"/>
    <property type="match status" value="1"/>
</dbReference>
<dbReference type="FunFam" id="3.40.50.300:FF:000429">
    <property type="entry name" value="Preprotein translocase subunit SecA"/>
    <property type="match status" value="1"/>
</dbReference>
<dbReference type="FunFam" id="1.10.3060.10:FF:000003">
    <property type="entry name" value="Protein translocase subunit SecA"/>
    <property type="match status" value="1"/>
</dbReference>
<dbReference type="FunFam" id="3.40.50.300:FF:000334">
    <property type="entry name" value="Protein translocase subunit SecA"/>
    <property type="match status" value="1"/>
</dbReference>
<dbReference type="Gene3D" id="1.10.3060.10">
    <property type="entry name" value="Helical scaffold and wing domains of SecA"/>
    <property type="match status" value="1"/>
</dbReference>
<dbReference type="Gene3D" id="3.40.50.300">
    <property type="entry name" value="P-loop containing nucleotide triphosphate hydrolases"/>
    <property type="match status" value="2"/>
</dbReference>
<dbReference type="Gene3D" id="3.90.1440.10">
    <property type="entry name" value="SecA, preprotein cross-linking domain"/>
    <property type="match status" value="1"/>
</dbReference>
<dbReference type="HAMAP" id="MF_01382">
    <property type="entry name" value="SecA"/>
    <property type="match status" value="1"/>
</dbReference>
<dbReference type="InterPro" id="IPR014001">
    <property type="entry name" value="Helicase_ATP-bd"/>
</dbReference>
<dbReference type="InterPro" id="IPR027417">
    <property type="entry name" value="P-loop_NTPase"/>
</dbReference>
<dbReference type="InterPro" id="IPR000185">
    <property type="entry name" value="SecA"/>
</dbReference>
<dbReference type="InterPro" id="IPR020937">
    <property type="entry name" value="SecA_CS"/>
</dbReference>
<dbReference type="InterPro" id="IPR011115">
    <property type="entry name" value="SecA_DEAD"/>
</dbReference>
<dbReference type="InterPro" id="IPR014018">
    <property type="entry name" value="SecA_motor_DEAD"/>
</dbReference>
<dbReference type="InterPro" id="IPR011130">
    <property type="entry name" value="SecA_preprotein_X-link_dom"/>
</dbReference>
<dbReference type="InterPro" id="IPR044722">
    <property type="entry name" value="SecA_SF2_C"/>
</dbReference>
<dbReference type="InterPro" id="IPR011116">
    <property type="entry name" value="SecA_Wing/Scaffold"/>
</dbReference>
<dbReference type="InterPro" id="IPR036266">
    <property type="entry name" value="SecA_Wing/Scaffold_sf"/>
</dbReference>
<dbReference type="InterPro" id="IPR036670">
    <property type="entry name" value="SecA_X-link_sf"/>
</dbReference>
<dbReference type="NCBIfam" id="TIGR00963">
    <property type="entry name" value="secA"/>
    <property type="match status" value="1"/>
</dbReference>
<dbReference type="PANTHER" id="PTHR30612:SF0">
    <property type="entry name" value="CHLOROPLAST PROTEIN-TRANSPORTING ATPASE"/>
    <property type="match status" value="1"/>
</dbReference>
<dbReference type="PANTHER" id="PTHR30612">
    <property type="entry name" value="SECA INNER MEMBRANE COMPONENT OF SEC PROTEIN SECRETION SYSTEM"/>
    <property type="match status" value="1"/>
</dbReference>
<dbReference type="Pfam" id="PF21090">
    <property type="entry name" value="P-loop_SecA"/>
    <property type="match status" value="1"/>
</dbReference>
<dbReference type="Pfam" id="PF07517">
    <property type="entry name" value="SecA_DEAD"/>
    <property type="match status" value="1"/>
</dbReference>
<dbReference type="Pfam" id="PF01043">
    <property type="entry name" value="SecA_PP_bind"/>
    <property type="match status" value="1"/>
</dbReference>
<dbReference type="Pfam" id="PF07516">
    <property type="entry name" value="SecA_SW"/>
    <property type="match status" value="1"/>
</dbReference>
<dbReference type="PRINTS" id="PR00906">
    <property type="entry name" value="SECA"/>
</dbReference>
<dbReference type="SMART" id="SM00957">
    <property type="entry name" value="SecA_DEAD"/>
    <property type="match status" value="1"/>
</dbReference>
<dbReference type="SMART" id="SM00958">
    <property type="entry name" value="SecA_PP_bind"/>
    <property type="match status" value="1"/>
</dbReference>
<dbReference type="SUPFAM" id="SSF81886">
    <property type="entry name" value="Helical scaffold and wing domains of SecA"/>
    <property type="match status" value="1"/>
</dbReference>
<dbReference type="SUPFAM" id="SSF52540">
    <property type="entry name" value="P-loop containing nucleoside triphosphate hydrolases"/>
    <property type="match status" value="2"/>
</dbReference>
<dbReference type="SUPFAM" id="SSF81767">
    <property type="entry name" value="Pre-protein crosslinking domain of SecA"/>
    <property type="match status" value="1"/>
</dbReference>
<dbReference type="PROSITE" id="PS01312">
    <property type="entry name" value="SECA"/>
    <property type="match status" value="1"/>
</dbReference>
<dbReference type="PROSITE" id="PS51196">
    <property type="entry name" value="SECA_MOTOR_DEAD"/>
    <property type="match status" value="1"/>
</dbReference>
<reference key="1">
    <citation type="journal article" date="2007" name="PLoS Genet.">
        <title>Patterns and implications of gene gain and loss in the evolution of Prochlorococcus.</title>
        <authorList>
            <person name="Kettler G.C."/>
            <person name="Martiny A.C."/>
            <person name="Huang K."/>
            <person name="Zucker J."/>
            <person name="Coleman M.L."/>
            <person name="Rodrigue S."/>
            <person name="Chen F."/>
            <person name="Lapidus A."/>
            <person name="Ferriera S."/>
            <person name="Johnson J."/>
            <person name="Steglich C."/>
            <person name="Church G.M."/>
            <person name="Richardson P."/>
            <person name="Chisholm S.W."/>
        </authorList>
    </citation>
    <scope>NUCLEOTIDE SEQUENCE [LARGE SCALE GENOMIC DNA]</scope>
    <source>
        <strain>MIT 9303</strain>
    </source>
</reference>
<name>SECA_PROM3</name>
<sequence length="951" mass="107486">MLKLLLGDPNARKLKRYQPIVTDINILEEDIALLSDDQLRSKTADFRQQFENVVSFPKQRVLLDELLPEAFAVVREAAKRVLGMRHFDVQLIGGMVLHEGQIGEMKTGEGKTLVATLPSYLNALTGRGVHVVTVNDYLARRDAEWMGQVHRFLGLSVGLIQQDMSPAERRRNYACDITYATNSELGFDYLRDNMATDLSEVVQREFQYCVIDEVDSILIDEARTPLIISGQVERPQEKYQQAADVAAALERAAEQGKDGIDPEGDYEVDEKQRSCTLTDEGFAKAEQNLKVRDLFDPADPWAHYITNALKAKELFVRDVNYIVRDGEAVIVDEFTGRVMPGRRWSDGQHQAIEAKEQLAIQPETQTLASITYQNFFLLYPRLAGMTGTAKTEEVEFEKTYKLETSVIPTNQPRARADWVDQVYKTESAKWRAVANETAEIHKQGRPVLVGTTSVEKSELLSSLLSEQEIPHNLLNAKPENVEREAEIVAQAGRAGAVTIATNMAGRGTDIILGGNSDYMARLKLREVLLPRLVRPEEGHRPPVPLQRAAETGGGFAAKAAASNGSHGHVLSEARAIGSLYPCSLTDDTDQFLAELARELVKVWGDRALSVIELEDRISTAAEKAPTDDAQIAALRESIARVKTEYDVVVTQEEVRVREAGGLHVIGTERHESRRVDNQLRGRAGRQGDLGSTRFFLSLEDNLLRIFGGERVASLMNAFRVEEDMPIESGMLTRSLEGAQKKVETYYYDIRKQVFEYDEVMNNQRRAVYAERRRVLEGRGLKKQVIGYGERTMDDVVEAYVNPDLPPEEWDLDQLVSKVQEFVYLLEDLKPEQLQGLSMEELKSFLQEQLRNAYDIKEGQIEQQRPGLMREAERFFILQQIDTLWREHLQAMDALRESVGLRGYGQKDPLIEYKNEGYDMFLEMMANMRRNVIYSMFMFQPAPAPAQEAANV</sequence>
<comment type="function">
    <text evidence="1">Part of the Sec protein translocase complex. Interacts with the SecYEG preprotein conducting channel. Has a central role in coupling the hydrolysis of ATP to the transfer of proteins into and across the cell membrane, serving as an ATP-driven molecular motor driving the stepwise translocation of polypeptide chains across the membrane.</text>
</comment>
<comment type="function">
    <text evidence="1">Probably participates in protein translocation into and across both the cytoplasmic and thylakoid membranes in cyanobacterial cells.</text>
</comment>
<comment type="catalytic activity">
    <reaction evidence="1">
        <text>ATP + H2O + cellular proteinSide 1 = ADP + phosphate + cellular proteinSide 2.</text>
        <dbReference type="EC" id="7.4.2.8"/>
    </reaction>
</comment>
<comment type="subunit">
    <text evidence="1">Monomer and homodimer. Part of the essential Sec protein translocation apparatus which comprises SecA, SecYEG and auxiliary proteins SecDF. Other proteins may also be involved.</text>
</comment>
<comment type="subcellular location">
    <subcellularLocation>
        <location evidence="1">Cell inner membrane</location>
        <topology evidence="1">Peripheral membrane protein</topology>
        <orientation evidence="1">Cytoplasmic side</orientation>
    </subcellularLocation>
    <subcellularLocation>
        <location evidence="1">Cellular thylakoid membrane</location>
        <topology evidence="1">Peripheral membrane protein</topology>
        <orientation evidence="1">Cytoplasmic side</orientation>
    </subcellularLocation>
    <subcellularLocation>
        <location evidence="1">Cytoplasm</location>
    </subcellularLocation>
</comment>
<comment type="similarity">
    <text evidence="1">Belongs to the SecA family.</text>
</comment>
<protein>
    <recommendedName>
        <fullName evidence="1">Protein translocase subunit SecA</fullName>
        <ecNumber evidence="1">7.4.2.8</ecNumber>
    </recommendedName>
</protein>
<evidence type="ECO:0000255" key="1">
    <source>
        <dbReference type="HAMAP-Rule" id="MF_01382"/>
    </source>
</evidence>
<proteinExistence type="inferred from homology"/>
<accession>A2C5Z6</accession>
<feature type="chain" id="PRO_0000318407" description="Protein translocase subunit SecA">
    <location>
        <begin position="1"/>
        <end position="951"/>
    </location>
</feature>
<feature type="binding site" evidence="1">
    <location>
        <position position="90"/>
    </location>
    <ligand>
        <name>ATP</name>
        <dbReference type="ChEBI" id="CHEBI:30616"/>
    </ligand>
</feature>
<feature type="binding site" evidence="1">
    <location>
        <begin position="108"/>
        <end position="112"/>
    </location>
    <ligand>
        <name>ATP</name>
        <dbReference type="ChEBI" id="CHEBI:30616"/>
    </ligand>
</feature>
<feature type="binding site" evidence="1">
    <location>
        <position position="509"/>
    </location>
    <ligand>
        <name>ATP</name>
        <dbReference type="ChEBI" id="CHEBI:30616"/>
    </ligand>
</feature>
<gene>
    <name evidence="1" type="primary">secA</name>
    <name type="ordered locus">P9303_01511</name>
</gene>